<dbReference type="EC" id="3.6.5.-" evidence="1"/>
<dbReference type="EMBL" id="AY123975">
    <property type="protein sequence ID" value="AAM88577.1"/>
    <property type="molecule type" value="mRNA"/>
</dbReference>
<dbReference type="EMBL" id="AY028170">
    <property type="protein sequence ID" value="AAK27416.1"/>
    <property type="molecule type" value="mRNA"/>
</dbReference>
<dbReference type="EMBL" id="AB048831">
    <property type="protein sequence ID" value="BAB39351.1"/>
    <property type="molecule type" value="mRNA"/>
</dbReference>
<dbReference type="EMBL" id="AF384100">
    <property type="protein sequence ID" value="AAK66559.1"/>
    <property type="molecule type" value="mRNA"/>
</dbReference>
<dbReference type="EMBL" id="AK042080">
    <property type="protein sequence ID" value="BAE20620.1"/>
    <property type="molecule type" value="mRNA"/>
</dbReference>
<dbReference type="EMBL" id="AK049583">
    <property type="protein sequence ID" value="BAC33826.1"/>
    <property type="molecule type" value="mRNA"/>
</dbReference>
<dbReference type="EMBL" id="AK052689">
    <property type="protein sequence ID" value="BAC35096.1"/>
    <property type="molecule type" value="mRNA"/>
</dbReference>
<dbReference type="EMBL" id="AK122220">
    <property type="protein sequence ID" value="BAC65502.2"/>
    <property type="status" value="ALT_INIT"/>
    <property type="molecule type" value="Transcribed_RNA"/>
</dbReference>
<dbReference type="EMBL" id="AL607066">
    <property type="status" value="NOT_ANNOTATED_CDS"/>
    <property type="molecule type" value="Genomic_DNA"/>
</dbReference>
<dbReference type="EMBL" id="BC046503">
    <property type="protein sequence ID" value="AAH46503.1"/>
    <property type="molecule type" value="mRNA"/>
</dbReference>
<dbReference type="CCDS" id="CCDS38965.1">
    <molecule id="Q80U63-1"/>
</dbReference>
<dbReference type="RefSeq" id="NP_001272849.1">
    <molecule id="Q80U63-1"/>
    <property type="nucleotide sequence ID" value="NM_001285920.1"/>
</dbReference>
<dbReference type="RefSeq" id="NP_001272850.1">
    <molecule id="Q80U63-1"/>
    <property type="nucleotide sequence ID" value="NM_001285921.1"/>
</dbReference>
<dbReference type="RefSeq" id="NP_001272851.1">
    <molecule id="Q80U63-1"/>
    <property type="nucleotide sequence ID" value="NM_001285922.1"/>
</dbReference>
<dbReference type="RefSeq" id="NP_001272852.1">
    <molecule id="Q80U63-1"/>
    <property type="nucleotide sequence ID" value="NM_001285923.1"/>
</dbReference>
<dbReference type="RefSeq" id="NP_001342519.1">
    <molecule id="Q80U63-1"/>
    <property type="nucleotide sequence ID" value="NM_001355590.1"/>
</dbReference>
<dbReference type="RefSeq" id="NP_001342520.1">
    <molecule id="Q80U63-1"/>
    <property type="nucleotide sequence ID" value="NM_001355591.1"/>
</dbReference>
<dbReference type="RefSeq" id="NP_573464.2">
    <molecule id="Q80U63-1"/>
    <property type="nucleotide sequence ID" value="NM_133201.3"/>
</dbReference>
<dbReference type="RefSeq" id="XP_006538672.1">
    <molecule id="Q80U63-1"/>
    <property type="nucleotide sequence ID" value="XM_006538609.5"/>
</dbReference>
<dbReference type="RefSeq" id="XP_006538673.1">
    <property type="nucleotide sequence ID" value="XM_006538610.2"/>
</dbReference>
<dbReference type="RefSeq" id="XP_006538674.1">
    <property type="nucleotide sequence ID" value="XM_006538611.3"/>
</dbReference>
<dbReference type="RefSeq" id="XP_036019671.1">
    <molecule id="Q80U63-1"/>
    <property type="nucleotide sequence ID" value="XM_036163778.1"/>
</dbReference>
<dbReference type="RefSeq" id="XP_036019672.1">
    <molecule id="Q80U63-1"/>
    <property type="nucleotide sequence ID" value="XM_036163779.1"/>
</dbReference>
<dbReference type="RefSeq" id="XP_036019673.1">
    <molecule id="Q80U63-1"/>
    <property type="nucleotide sequence ID" value="XM_036163780.1"/>
</dbReference>
<dbReference type="RefSeq" id="XP_036019674.1">
    <molecule id="Q80U63-1"/>
    <property type="nucleotide sequence ID" value="XM_036163781.1"/>
</dbReference>
<dbReference type="SMR" id="Q80U63"/>
<dbReference type="BioGRID" id="228398">
    <property type="interactions" value="15"/>
</dbReference>
<dbReference type="DIP" id="DIP-60970N"/>
<dbReference type="FunCoup" id="Q80U63">
    <property type="interactions" value="3564"/>
</dbReference>
<dbReference type="IntAct" id="Q80U63">
    <property type="interactions" value="8"/>
</dbReference>
<dbReference type="MINT" id="Q80U63"/>
<dbReference type="STRING" id="10090.ENSMUSP00000030884"/>
<dbReference type="GuidetoPHARMACOLOGY" id="3131"/>
<dbReference type="GlyGen" id="Q80U63">
    <property type="glycosylation" value="2 sites, 1 O-linked glycan (1 site)"/>
</dbReference>
<dbReference type="iPTMnet" id="Q80U63"/>
<dbReference type="PhosphoSitePlus" id="Q80U63"/>
<dbReference type="SwissPalm" id="Q80U63"/>
<dbReference type="jPOST" id="Q80U63"/>
<dbReference type="PaxDb" id="10090-ENSMUSP00000101341"/>
<dbReference type="PeptideAtlas" id="Q80U63"/>
<dbReference type="ProteomicsDB" id="295893">
    <molecule id="Q80U63-1"/>
</dbReference>
<dbReference type="ProteomicsDB" id="295894">
    <molecule id="Q80U63-2"/>
</dbReference>
<dbReference type="Pumba" id="Q80U63"/>
<dbReference type="ABCD" id="Q80U63">
    <property type="antibodies" value="1 sequenced antibody"/>
</dbReference>
<dbReference type="Antibodypedia" id="28394">
    <property type="antibodies" value="740 antibodies from 46 providers"/>
</dbReference>
<dbReference type="DNASU" id="170731"/>
<dbReference type="Ensembl" id="ENSMUST00000030884.10">
    <molecule id="Q80U63-1"/>
    <property type="protein sequence ID" value="ENSMUSP00000030884.4"/>
    <property type="gene ID" value="ENSMUSG00000029020.14"/>
</dbReference>
<dbReference type="Ensembl" id="ENSMUST00000105714.8">
    <molecule id="Q80U63-2"/>
    <property type="protein sequence ID" value="ENSMUSP00000101339.2"/>
    <property type="gene ID" value="ENSMUSG00000029020.14"/>
</dbReference>
<dbReference type="Ensembl" id="ENSMUST00000105715.8">
    <molecule id="Q80U63-1"/>
    <property type="protein sequence ID" value="ENSMUSP00000101340.2"/>
    <property type="gene ID" value="ENSMUSG00000029020.14"/>
</dbReference>
<dbReference type="Ensembl" id="ENSMUST00000105716.9">
    <molecule id="Q80U63-1"/>
    <property type="protein sequence ID" value="ENSMUSP00000101341.3"/>
    <property type="gene ID" value="ENSMUSG00000029020.14"/>
</dbReference>
<dbReference type="GeneID" id="170731"/>
<dbReference type="KEGG" id="mmu:170731"/>
<dbReference type="UCSC" id="uc008vtg.2">
    <molecule id="Q80U63-1"/>
    <property type="organism name" value="mouse"/>
</dbReference>
<dbReference type="UCSC" id="uc008vtj.2">
    <molecule id="Q80U63-2"/>
    <property type="organism name" value="mouse"/>
</dbReference>
<dbReference type="AGR" id="MGI:2442230"/>
<dbReference type="CTD" id="9927"/>
<dbReference type="MGI" id="MGI:2442230">
    <property type="gene designation" value="Mfn2"/>
</dbReference>
<dbReference type="VEuPathDB" id="HostDB:ENSMUSG00000029020"/>
<dbReference type="eggNOG" id="KOG0448">
    <property type="taxonomic scope" value="Eukaryota"/>
</dbReference>
<dbReference type="GeneTree" id="ENSGT00390000013727"/>
<dbReference type="HOGENOM" id="CLU_021212_2_0_1"/>
<dbReference type="InParanoid" id="Q80U63"/>
<dbReference type="OMA" id="YRINCES"/>
<dbReference type="OrthoDB" id="6256226at2759"/>
<dbReference type="PhylomeDB" id="Q80U63"/>
<dbReference type="TreeFam" id="TF314289"/>
<dbReference type="Reactome" id="R-MMU-5205685">
    <property type="pathway name" value="PINK1-PRKN Mediated Mitophagy"/>
</dbReference>
<dbReference type="Reactome" id="R-MMU-9013419">
    <property type="pathway name" value="RHOT2 GTPase cycle"/>
</dbReference>
<dbReference type="Reactome" id="R-MMU-983231">
    <property type="pathway name" value="Factors involved in megakaryocyte development and platelet production"/>
</dbReference>
<dbReference type="BioGRID-ORCS" id="170731">
    <property type="hits" value="15 hits in 79 CRISPR screens"/>
</dbReference>
<dbReference type="CD-CODE" id="CE726F99">
    <property type="entry name" value="Postsynaptic density"/>
</dbReference>
<dbReference type="ChiTaRS" id="Mfn2">
    <property type="organism name" value="mouse"/>
</dbReference>
<dbReference type="PRO" id="PR:Q80U63"/>
<dbReference type="Proteomes" id="UP000000589">
    <property type="component" value="Chromosome 4"/>
</dbReference>
<dbReference type="RNAct" id="Q80U63">
    <property type="molecule type" value="protein"/>
</dbReference>
<dbReference type="Bgee" id="ENSMUSG00000029020">
    <property type="expression patterns" value="Expressed in interventricular septum and 256 other cell types or tissues"/>
</dbReference>
<dbReference type="ExpressionAtlas" id="Q80U63">
    <property type="expression patterns" value="baseline and differential"/>
</dbReference>
<dbReference type="GO" id="GO:0005829">
    <property type="term" value="C:cytosol"/>
    <property type="evidence" value="ECO:0000250"/>
    <property type="project" value="UniProtKB"/>
</dbReference>
<dbReference type="GO" id="GO:0015630">
    <property type="term" value="C:microtubule cytoskeleton"/>
    <property type="evidence" value="ECO:0000314"/>
    <property type="project" value="MGI"/>
</dbReference>
<dbReference type="GO" id="GO:0005741">
    <property type="term" value="C:mitochondrial outer membrane"/>
    <property type="evidence" value="ECO:0000250"/>
    <property type="project" value="UniProtKB"/>
</dbReference>
<dbReference type="GO" id="GO:0005739">
    <property type="term" value="C:mitochondrion"/>
    <property type="evidence" value="ECO:0000314"/>
    <property type="project" value="MGI"/>
</dbReference>
<dbReference type="GO" id="GO:0005525">
    <property type="term" value="F:GTP binding"/>
    <property type="evidence" value="ECO:0007669"/>
    <property type="project" value="UniProtKB-KW"/>
</dbReference>
<dbReference type="GO" id="GO:0003924">
    <property type="term" value="F:GTPase activity"/>
    <property type="evidence" value="ECO:0007669"/>
    <property type="project" value="InterPro"/>
</dbReference>
<dbReference type="GO" id="GO:0031625">
    <property type="term" value="F:ubiquitin protein ligase binding"/>
    <property type="evidence" value="ECO:0007669"/>
    <property type="project" value="Ensembl"/>
</dbReference>
<dbReference type="GO" id="GO:0009060">
    <property type="term" value="P:aerobic respiration"/>
    <property type="evidence" value="ECO:0000250"/>
    <property type="project" value="UniProtKB"/>
</dbReference>
<dbReference type="GO" id="GO:0006915">
    <property type="term" value="P:apoptotic process"/>
    <property type="evidence" value="ECO:0007669"/>
    <property type="project" value="UniProtKB-KW"/>
</dbReference>
<dbReference type="GO" id="GO:0001825">
    <property type="term" value="P:blastocyst formation"/>
    <property type="evidence" value="ECO:0000315"/>
    <property type="project" value="MGI"/>
</dbReference>
<dbReference type="GO" id="GO:0048593">
    <property type="term" value="P:camera-type eye morphogenesis"/>
    <property type="evidence" value="ECO:0000315"/>
    <property type="project" value="MGI"/>
</dbReference>
<dbReference type="GO" id="GO:0008053">
    <property type="term" value="P:mitochondrial fusion"/>
    <property type="evidence" value="ECO:0000315"/>
    <property type="project" value="UniProtKB"/>
</dbReference>
<dbReference type="GO" id="GO:0007006">
    <property type="term" value="P:mitochondrial membrane organization"/>
    <property type="evidence" value="ECO:0000250"/>
    <property type="project" value="UniProtKB"/>
</dbReference>
<dbReference type="GO" id="GO:0051646">
    <property type="term" value="P:mitochondrion localization"/>
    <property type="evidence" value="ECO:0000250"/>
    <property type="project" value="UniProtKB"/>
</dbReference>
<dbReference type="GO" id="GO:0046580">
    <property type="term" value="P:negative regulation of Ras protein signal transduction"/>
    <property type="evidence" value="ECO:0007669"/>
    <property type="project" value="Ensembl"/>
</dbReference>
<dbReference type="GO" id="GO:0048662">
    <property type="term" value="P:negative regulation of smooth muscle cell proliferation"/>
    <property type="evidence" value="ECO:0000250"/>
    <property type="project" value="UniProtKB"/>
</dbReference>
<dbReference type="GO" id="GO:0120162">
    <property type="term" value="P:positive regulation of cold-induced thermogenesis"/>
    <property type="evidence" value="ECO:0000315"/>
    <property type="project" value="YuBioLab"/>
</dbReference>
<dbReference type="GO" id="GO:1905461">
    <property type="term" value="P:positive regulation of vascular associated smooth muscle cell apoptotic process"/>
    <property type="evidence" value="ECO:0007669"/>
    <property type="project" value="Ensembl"/>
</dbReference>
<dbReference type="GO" id="GO:1904707">
    <property type="term" value="P:positive regulation of vascular associated smooth muscle cell proliferation"/>
    <property type="evidence" value="ECO:0007669"/>
    <property type="project" value="Ensembl"/>
</dbReference>
<dbReference type="GO" id="GO:0034497">
    <property type="term" value="P:protein localization to phagophore assembly site"/>
    <property type="evidence" value="ECO:0000266"/>
    <property type="project" value="MGI"/>
</dbReference>
<dbReference type="GO" id="GO:0006626">
    <property type="term" value="P:protein targeting to mitochondrion"/>
    <property type="evidence" value="ECO:0000250"/>
    <property type="project" value="UniProtKB"/>
</dbReference>
<dbReference type="GO" id="GO:0006986">
    <property type="term" value="P:response to unfolded protein"/>
    <property type="evidence" value="ECO:0007669"/>
    <property type="project" value="UniProtKB-KW"/>
</dbReference>
<dbReference type="GO" id="GO:0061734">
    <property type="term" value="P:type 2 mitophagy"/>
    <property type="evidence" value="ECO:0000315"/>
    <property type="project" value="ParkinsonsUK-UCL"/>
</dbReference>
<dbReference type="CDD" id="cd09912">
    <property type="entry name" value="DLP_2"/>
    <property type="match status" value="1"/>
</dbReference>
<dbReference type="FunFam" id="1.20.5.110:FF:000012">
    <property type="entry name" value="Mitofusin 2"/>
    <property type="match status" value="1"/>
</dbReference>
<dbReference type="FunFam" id="3.40.50.300:FF:000214">
    <property type="entry name" value="Mitofusin 2"/>
    <property type="match status" value="1"/>
</dbReference>
<dbReference type="Gene3D" id="1.20.5.110">
    <property type="match status" value="1"/>
</dbReference>
<dbReference type="Gene3D" id="3.40.50.300">
    <property type="entry name" value="P-loop containing nucleotide triphosphate hydrolases"/>
    <property type="match status" value="1"/>
</dbReference>
<dbReference type="InterPro" id="IPR045063">
    <property type="entry name" value="Dynamin_N"/>
</dbReference>
<dbReference type="InterPro" id="IPR006884">
    <property type="entry name" value="Fzo/mitofusin_HR2"/>
</dbReference>
<dbReference type="InterPro" id="IPR030381">
    <property type="entry name" value="G_DYNAMIN_dom"/>
</dbReference>
<dbReference type="InterPro" id="IPR027094">
    <property type="entry name" value="Mitofusin_fam"/>
</dbReference>
<dbReference type="InterPro" id="IPR027417">
    <property type="entry name" value="P-loop_NTPase"/>
</dbReference>
<dbReference type="PANTHER" id="PTHR10465:SF1">
    <property type="entry name" value="MITOFUSIN-2"/>
    <property type="match status" value="1"/>
</dbReference>
<dbReference type="PANTHER" id="PTHR10465">
    <property type="entry name" value="TRANSMEMBRANE GTPASE FZO1"/>
    <property type="match status" value="1"/>
</dbReference>
<dbReference type="Pfam" id="PF00350">
    <property type="entry name" value="Dynamin_N"/>
    <property type="match status" value="1"/>
</dbReference>
<dbReference type="Pfam" id="PF04799">
    <property type="entry name" value="Fzo_mitofusin"/>
    <property type="match status" value="1"/>
</dbReference>
<dbReference type="SUPFAM" id="SSF111479">
    <property type="entry name" value="Fzo-like conserved region"/>
    <property type="match status" value="1"/>
</dbReference>
<dbReference type="SUPFAM" id="SSF52540">
    <property type="entry name" value="P-loop containing nucleoside triphosphate hydrolases"/>
    <property type="match status" value="1"/>
</dbReference>
<dbReference type="PROSITE" id="PS51718">
    <property type="entry name" value="G_DYNAMIN_2"/>
    <property type="match status" value="1"/>
</dbReference>
<keyword id="KW-0025">Alternative splicing</keyword>
<keyword id="KW-0053">Apoptosis</keyword>
<keyword id="KW-0072">Autophagy</keyword>
<keyword id="KW-0175">Coiled coil</keyword>
<keyword id="KW-0217">Developmental protein</keyword>
<keyword id="KW-0903">Direct protein sequencing</keyword>
<keyword id="KW-0342">GTP-binding</keyword>
<keyword id="KW-0378">Hydrolase</keyword>
<keyword id="KW-0472">Membrane</keyword>
<keyword id="KW-0496">Mitochondrion</keyword>
<keyword id="KW-1000">Mitochondrion outer membrane</keyword>
<keyword id="KW-0547">Nucleotide-binding</keyword>
<keyword id="KW-0597">Phosphoprotein</keyword>
<keyword id="KW-1185">Reference proteome</keyword>
<keyword id="KW-0812">Transmembrane</keyword>
<keyword id="KW-1133">Transmembrane helix</keyword>
<keyword id="KW-0832">Ubl conjugation</keyword>
<keyword id="KW-0834">Unfolded protein response</keyword>
<sequence length="757" mass="86188">MSLLFSRCNSIVTVKKDKRHMAEVNASPLKHFVTAKKKINGIFEQLGAYIQESASFLEDTHRNTELDPVTTEEQVLDVKGYLSKVRGISEVLARRHMKVAFFGRTSNGKSTVINAMLWDKVLPSGIGHTTNCFLRVGGTDGHEAFLLTEGSEEKKSVKTVNQLAHALHQDEQLHAGSMVSVMWPNSKCPLLKDDLVLMDSPGIDVTTELDSWIDKFCLDADVFVLVANSESTLMQTEKQFFHKVSERLSRPNIFILNNRWDASASEPEYMEEVRRQHMERCTSFLVDELGVVDRAQAGDRIFFVSAKEVLSARVQKAQGMPEGGGALAEGFQVRMFEFQNFERQFEECISQSAVKTKFEQHTVRAKQIAEAVRLIMDSLHIAAQEQRVYCLEMREERQDRLRFIDKQLELLAQDYKLRIKQITEEVERQVSTAMAEEIRRLSVLVDEYQMDFHPSPVVLKVYKNELHRHIEEGLGRNLSDRCSTAIASSLQTMQQDMIDGLKPLLPVSMRNQIDMLVPRQCFSLSYDLNCDKLCADFQEDIEFHFSLGWTMLVNRFLGPKNSRRALLGYSDQVQRPLPLTPANPSMPPLPQSSLTQEELMVSMVTGLASLTSRTSMGILVVGGVVWKAVGWRLIALSFGLYGLLYVYERLTWTTKAKERAFKRQFVEYASEKLQLIISYTGSNCSHQVQQELSGTFAHLCQQVDITRDNLEQEIAAMNKKVEALDSLQSRAKLLRNKAGWLDSELNMFTHQYLQPSR</sequence>
<reference key="1">
    <citation type="journal article" date="2003" name="J. Cell Biol.">
        <title>Mitofusins Mfn1 and Mfn2 coordinately regulate mitochondrial fusion and are essential for embryonic development.</title>
        <authorList>
            <person name="Chen H."/>
            <person name="Detmer S.A."/>
            <person name="Ewald A.J."/>
            <person name="Griffin E.E."/>
            <person name="Fraser S.E."/>
            <person name="Chan D.C."/>
        </authorList>
    </citation>
    <scope>NUCLEOTIDE SEQUENCE [MRNA] (ISOFORM 1)</scope>
    <scope>FUNCTION</scope>
    <scope>DISRUPTION PHENOTYPE</scope>
    <scope>MULTIMERIZATION</scope>
    <scope>SUBUNIT</scope>
    <source>
        <strain>FVB/NJ</strain>
    </source>
</reference>
<reference key="2">
    <citation type="journal article" date="2003" name="J. Biol. Chem.">
        <title>Mitofusin-2 determines mitochondrial network architecture and mitochondrial metabolism. A novel regulatory mechanism altered in obesity.</title>
        <authorList>
            <person name="Bach D."/>
            <person name="Pich S."/>
            <person name="Soriano F.X."/>
            <person name="Vega N."/>
            <person name="Baumgartner B."/>
            <person name="Oriola J."/>
            <person name="Daugaard J.R."/>
            <person name="Lloberas J."/>
            <person name="Camps M."/>
            <person name="Zierath J.R."/>
            <person name="Rabasa-Lhoret R."/>
            <person name="Wallberg-Henriksson H."/>
            <person name="Laville M."/>
            <person name="Palacin M."/>
            <person name="Vidal H."/>
            <person name="Rivera F."/>
            <person name="Brand M."/>
            <person name="Zorzano A."/>
        </authorList>
    </citation>
    <scope>NUCLEOTIDE SEQUENCE [MRNA] (ISOFORM 1)</scope>
</reference>
<reference key="3">
    <citation type="submission" date="2000-09" db="EMBL/GenBank/DDBJ databases">
        <title>Characterization of mouse fzo.</title>
        <authorList>
            <person name="Honda S."/>
            <person name="Hirose S."/>
        </authorList>
    </citation>
    <scope>NUCLEOTIDE SEQUENCE [MRNA] (ISOFORM 1)</scope>
</reference>
<reference key="4">
    <citation type="journal article" date="2004" name="Nat. Cell Biol.">
        <title>Dysregulation of HSG triggers vascular proliferative disorders.</title>
        <authorList>
            <person name="Chen K.-H."/>
            <person name="Guo X."/>
            <person name="Ma D."/>
            <person name="Guo Y."/>
            <person name="Li Q."/>
            <person name="Yang D."/>
            <person name="Li P."/>
            <person name="Qiu X."/>
            <person name="Wen S."/>
            <person name="Xiao R.-P."/>
            <person name="Tang J."/>
        </authorList>
    </citation>
    <scope>NUCLEOTIDE SEQUENCE [MRNA] (ISOFORM 1)</scope>
    <scope>TISSUE SPECIFICITY</scope>
    <source>
        <strain>BALB/cJ</strain>
    </source>
</reference>
<reference key="5">
    <citation type="journal article" date="2003" name="DNA Res.">
        <title>Prediction of the coding sequences of mouse homologues of KIAA gene: II. The complete nucleotide sequences of 400 mouse KIAA-homologous cDNAs identified by screening of terminal sequences of cDNA clones randomly sampled from size-fractionated libraries.</title>
        <authorList>
            <person name="Okazaki N."/>
            <person name="Kikuno R."/>
            <person name="Ohara R."/>
            <person name="Inamoto S."/>
            <person name="Aizawa H."/>
            <person name="Yuasa S."/>
            <person name="Nakajima D."/>
            <person name="Nagase T."/>
            <person name="Ohara O."/>
            <person name="Koga H."/>
        </authorList>
    </citation>
    <scope>NUCLEOTIDE SEQUENCE [LARGE SCALE MRNA] (ISOFORM 1)</scope>
    <source>
        <tissue>Brain</tissue>
    </source>
</reference>
<reference key="6">
    <citation type="submission" date="2003-08" db="EMBL/GenBank/DDBJ databases">
        <authorList>
            <person name="Okazaki N."/>
            <person name="Kikuno R."/>
            <person name="Nagase T."/>
            <person name="Ohara O."/>
            <person name="Koga H."/>
        </authorList>
    </citation>
    <scope>SEQUENCE REVISION</scope>
</reference>
<reference key="7">
    <citation type="journal article" date="2005" name="Science">
        <title>The transcriptional landscape of the mammalian genome.</title>
        <authorList>
            <person name="Carninci P."/>
            <person name="Kasukawa T."/>
            <person name="Katayama S."/>
            <person name="Gough J."/>
            <person name="Frith M.C."/>
            <person name="Maeda N."/>
            <person name="Oyama R."/>
            <person name="Ravasi T."/>
            <person name="Lenhard B."/>
            <person name="Wells C."/>
            <person name="Kodzius R."/>
            <person name="Shimokawa K."/>
            <person name="Bajic V.B."/>
            <person name="Brenner S.E."/>
            <person name="Batalov S."/>
            <person name="Forrest A.R."/>
            <person name="Zavolan M."/>
            <person name="Davis M.J."/>
            <person name="Wilming L.G."/>
            <person name="Aidinis V."/>
            <person name="Allen J.E."/>
            <person name="Ambesi-Impiombato A."/>
            <person name="Apweiler R."/>
            <person name="Aturaliya R.N."/>
            <person name="Bailey T.L."/>
            <person name="Bansal M."/>
            <person name="Baxter L."/>
            <person name="Beisel K.W."/>
            <person name="Bersano T."/>
            <person name="Bono H."/>
            <person name="Chalk A.M."/>
            <person name="Chiu K.P."/>
            <person name="Choudhary V."/>
            <person name="Christoffels A."/>
            <person name="Clutterbuck D.R."/>
            <person name="Crowe M.L."/>
            <person name="Dalla E."/>
            <person name="Dalrymple B.P."/>
            <person name="de Bono B."/>
            <person name="Della Gatta G."/>
            <person name="di Bernardo D."/>
            <person name="Down T."/>
            <person name="Engstrom P."/>
            <person name="Fagiolini M."/>
            <person name="Faulkner G."/>
            <person name="Fletcher C.F."/>
            <person name="Fukushima T."/>
            <person name="Furuno M."/>
            <person name="Futaki S."/>
            <person name="Gariboldi M."/>
            <person name="Georgii-Hemming P."/>
            <person name="Gingeras T.R."/>
            <person name="Gojobori T."/>
            <person name="Green R.E."/>
            <person name="Gustincich S."/>
            <person name="Harbers M."/>
            <person name="Hayashi Y."/>
            <person name="Hensch T.K."/>
            <person name="Hirokawa N."/>
            <person name="Hill D."/>
            <person name="Huminiecki L."/>
            <person name="Iacono M."/>
            <person name="Ikeo K."/>
            <person name="Iwama A."/>
            <person name="Ishikawa T."/>
            <person name="Jakt M."/>
            <person name="Kanapin A."/>
            <person name="Katoh M."/>
            <person name="Kawasawa Y."/>
            <person name="Kelso J."/>
            <person name="Kitamura H."/>
            <person name="Kitano H."/>
            <person name="Kollias G."/>
            <person name="Krishnan S.P."/>
            <person name="Kruger A."/>
            <person name="Kummerfeld S.K."/>
            <person name="Kurochkin I.V."/>
            <person name="Lareau L.F."/>
            <person name="Lazarevic D."/>
            <person name="Lipovich L."/>
            <person name="Liu J."/>
            <person name="Liuni S."/>
            <person name="McWilliam S."/>
            <person name="Madan Babu M."/>
            <person name="Madera M."/>
            <person name="Marchionni L."/>
            <person name="Matsuda H."/>
            <person name="Matsuzawa S."/>
            <person name="Miki H."/>
            <person name="Mignone F."/>
            <person name="Miyake S."/>
            <person name="Morris K."/>
            <person name="Mottagui-Tabar S."/>
            <person name="Mulder N."/>
            <person name="Nakano N."/>
            <person name="Nakauchi H."/>
            <person name="Ng P."/>
            <person name="Nilsson R."/>
            <person name="Nishiguchi S."/>
            <person name="Nishikawa S."/>
            <person name="Nori F."/>
            <person name="Ohara O."/>
            <person name="Okazaki Y."/>
            <person name="Orlando V."/>
            <person name="Pang K.C."/>
            <person name="Pavan W.J."/>
            <person name="Pavesi G."/>
            <person name="Pesole G."/>
            <person name="Petrovsky N."/>
            <person name="Piazza S."/>
            <person name="Reed J."/>
            <person name="Reid J.F."/>
            <person name="Ring B.Z."/>
            <person name="Ringwald M."/>
            <person name="Rost B."/>
            <person name="Ruan Y."/>
            <person name="Salzberg S.L."/>
            <person name="Sandelin A."/>
            <person name="Schneider C."/>
            <person name="Schoenbach C."/>
            <person name="Sekiguchi K."/>
            <person name="Semple C.A."/>
            <person name="Seno S."/>
            <person name="Sessa L."/>
            <person name="Sheng Y."/>
            <person name="Shibata Y."/>
            <person name="Shimada H."/>
            <person name="Shimada K."/>
            <person name="Silva D."/>
            <person name="Sinclair B."/>
            <person name="Sperling S."/>
            <person name="Stupka E."/>
            <person name="Sugiura K."/>
            <person name="Sultana R."/>
            <person name="Takenaka Y."/>
            <person name="Taki K."/>
            <person name="Tammoja K."/>
            <person name="Tan S.L."/>
            <person name="Tang S."/>
            <person name="Taylor M.S."/>
            <person name="Tegner J."/>
            <person name="Teichmann S.A."/>
            <person name="Ueda H.R."/>
            <person name="van Nimwegen E."/>
            <person name="Verardo R."/>
            <person name="Wei C.L."/>
            <person name="Yagi K."/>
            <person name="Yamanishi H."/>
            <person name="Zabarovsky E."/>
            <person name="Zhu S."/>
            <person name="Zimmer A."/>
            <person name="Hide W."/>
            <person name="Bult C."/>
            <person name="Grimmond S.M."/>
            <person name="Teasdale R.D."/>
            <person name="Liu E.T."/>
            <person name="Brusic V."/>
            <person name="Quackenbush J."/>
            <person name="Wahlestedt C."/>
            <person name="Mattick J.S."/>
            <person name="Hume D.A."/>
            <person name="Kai C."/>
            <person name="Sasaki D."/>
            <person name="Tomaru Y."/>
            <person name="Fukuda S."/>
            <person name="Kanamori-Katayama M."/>
            <person name="Suzuki M."/>
            <person name="Aoki J."/>
            <person name="Arakawa T."/>
            <person name="Iida J."/>
            <person name="Imamura K."/>
            <person name="Itoh M."/>
            <person name="Kato T."/>
            <person name="Kawaji H."/>
            <person name="Kawagashira N."/>
            <person name="Kawashima T."/>
            <person name="Kojima M."/>
            <person name="Kondo S."/>
            <person name="Konno H."/>
            <person name="Nakano K."/>
            <person name="Ninomiya N."/>
            <person name="Nishio T."/>
            <person name="Okada M."/>
            <person name="Plessy C."/>
            <person name="Shibata K."/>
            <person name="Shiraki T."/>
            <person name="Suzuki S."/>
            <person name="Tagami M."/>
            <person name="Waki K."/>
            <person name="Watahiki A."/>
            <person name="Okamura-Oho Y."/>
            <person name="Suzuki H."/>
            <person name="Kawai J."/>
            <person name="Hayashizaki Y."/>
        </authorList>
    </citation>
    <scope>NUCLEOTIDE SEQUENCE [LARGE SCALE MRNA] (ISOFORMS 1 AND 2)</scope>
    <source>
        <strain>C57BL/6J</strain>
        <tissue>Kidney</tissue>
        <tissue>Thymus</tissue>
    </source>
</reference>
<reference key="8">
    <citation type="journal article" date="2009" name="PLoS Biol.">
        <title>Lineage-specific biology revealed by a finished genome assembly of the mouse.</title>
        <authorList>
            <person name="Church D.M."/>
            <person name="Goodstadt L."/>
            <person name="Hillier L.W."/>
            <person name="Zody M.C."/>
            <person name="Goldstein S."/>
            <person name="She X."/>
            <person name="Bult C.J."/>
            <person name="Agarwala R."/>
            <person name="Cherry J.L."/>
            <person name="DiCuccio M."/>
            <person name="Hlavina W."/>
            <person name="Kapustin Y."/>
            <person name="Meric P."/>
            <person name="Maglott D."/>
            <person name="Birtle Z."/>
            <person name="Marques A.C."/>
            <person name="Graves T."/>
            <person name="Zhou S."/>
            <person name="Teague B."/>
            <person name="Potamousis K."/>
            <person name="Churas C."/>
            <person name="Place M."/>
            <person name="Herschleb J."/>
            <person name="Runnheim R."/>
            <person name="Forrest D."/>
            <person name="Amos-Landgraf J."/>
            <person name="Schwartz D.C."/>
            <person name="Cheng Z."/>
            <person name="Lindblad-Toh K."/>
            <person name="Eichler E.E."/>
            <person name="Ponting C.P."/>
        </authorList>
    </citation>
    <scope>NUCLEOTIDE SEQUENCE [LARGE SCALE GENOMIC DNA]</scope>
    <source>
        <strain>C57BL/6J</strain>
    </source>
</reference>
<reference key="9">
    <citation type="journal article" date="2004" name="Genome Res.">
        <title>The status, quality, and expansion of the NIH full-length cDNA project: the Mammalian Gene Collection (MGC).</title>
        <authorList>
            <consortium name="The MGC Project Team"/>
        </authorList>
    </citation>
    <scope>NUCLEOTIDE SEQUENCE [LARGE SCALE MRNA] (ISOFORM 1)</scope>
    <source>
        <strain>FVB/N</strain>
        <tissue>Salivary gland</tissue>
    </source>
</reference>
<reference key="10">
    <citation type="submission" date="2007-04" db="UniProtKB">
        <authorList>
            <person name="Lubec G."/>
            <person name="Kang S.U."/>
        </authorList>
    </citation>
    <scope>PROTEIN SEQUENCE OF 421-428</scope>
    <scope>IDENTIFICATION BY MASS SPECTROMETRY</scope>
    <source>
        <strain>C57BL/6J</strain>
        <tissue>Brain</tissue>
    </source>
</reference>
<reference key="11">
    <citation type="journal article" date="2002" name="J. Cell Sci.">
        <title>Membrane topology and mitochondrial targeting of mitofusins, ubiquitous mammalian homologs of the transmembrane GTPase Fzo.</title>
        <authorList>
            <person name="Rojo M."/>
            <person name="Legros F."/>
            <person name="Chateau D."/>
            <person name="Lombes A."/>
        </authorList>
    </citation>
    <scope>TISSUE SPECIFICITY</scope>
</reference>
<reference key="12">
    <citation type="journal article" date="2010" name="Cell">
        <title>A tissue-specific atlas of mouse protein phosphorylation and expression.</title>
        <authorList>
            <person name="Huttlin E.L."/>
            <person name="Jedrychowski M.P."/>
            <person name="Elias J.E."/>
            <person name="Goswami T."/>
            <person name="Rad R."/>
            <person name="Beausoleil S.A."/>
            <person name="Villen J."/>
            <person name="Haas W."/>
            <person name="Sowa M.E."/>
            <person name="Gygi S.P."/>
        </authorList>
    </citation>
    <scope>PHOSPHORYLATION [LARGE SCALE ANALYSIS] AT SER-442</scope>
    <scope>IDENTIFICATION BY MASS SPECTROMETRY [LARGE SCALE ANALYSIS]</scope>
    <source>
        <tissue>Brain</tissue>
        <tissue>Brown adipose tissue</tissue>
        <tissue>Heart</tissue>
        <tissue>Kidney</tissue>
        <tissue>Liver</tissue>
        <tissue>Lung</tissue>
        <tissue>Spleen</tissue>
        <tissue>Testis</tissue>
    </source>
</reference>
<reference key="13">
    <citation type="journal article" date="2013" name="EMBO J.">
        <title>Mfn2 modulates the UPR and mitochondrial function via repression of PERK.</title>
        <authorList>
            <person name="Munoz J.P."/>
            <person name="Ivanova S."/>
            <person name="Sanchez-Wandelmer J."/>
            <person name="Martinez-Cristobal P."/>
            <person name="Noguera E."/>
            <person name="Sancho A."/>
            <person name="Diaz-Ramos A."/>
            <person name="Hernandez-Alvarez M.I."/>
            <person name="Sebastian D."/>
            <person name="Mauvezin C."/>
            <person name="Palacin M."/>
            <person name="Zorzano A."/>
        </authorList>
    </citation>
    <scope>FUNCTION IN UPR</scope>
    <scope>INTERACTION WITH EIF2AK3</scope>
</reference>
<reference key="14">
    <citation type="journal article" date="2013" name="J. Biol. Chem.">
        <title>MiD49 and MiD51 can act independently of Mff and Fis1 in Drp1 recruitment and are specific for mitochondrial fission.</title>
        <authorList>
            <person name="Palmer C.S."/>
            <person name="Elgass K.D."/>
            <person name="Parton R.G."/>
            <person name="Osellame L.D."/>
            <person name="Stojanovski D."/>
            <person name="Ryan M.T."/>
        </authorList>
    </citation>
    <scope>FUNCTION</scope>
</reference>
<reference key="15">
    <citation type="journal article" date="2013" name="Science">
        <title>PINK1-phosphorylated mitofusin 2 is a Parkin receptor for culling damaged mitochondria.</title>
        <authorList>
            <person name="Chen Y."/>
            <person name="Dorn G.W. II"/>
        </authorList>
    </citation>
    <scope>FUNCTION IN MITOPHAGY</scope>
    <scope>INTERACTION WITH PRKN</scope>
    <scope>PHOSPHORYLATION AT THR-111 AND SER-442</scope>
    <scope>UBIQUITINATION BY PRKN</scope>
    <scope>SUBCELLULAR LOCATION</scope>
    <scope>DISRUPTION PHENOTYPE</scope>
</reference>
<reference key="16">
    <citation type="journal article" date="2014" name="Cell Res.">
        <title>A small natural molecule promotes mitochondrial fusion through inhibition of the deubiquitinase USP30.</title>
        <authorList>
            <person name="Yue W."/>
            <person name="Chen Z."/>
            <person name="Liu H."/>
            <person name="Yan C."/>
            <person name="Chen M."/>
            <person name="Feng D."/>
            <person name="Yan C."/>
            <person name="Wu H."/>
            <person name="Du L."/>
            <person name="Wang Y."/>
            <person name="Liu J."/>
            <person name="Huang X."/>
            <person name="Xia L."/>
            <person name="Liu L."/>
            <person name="Wang X."/>
            <person name="Jin H."/>
            <person name="Wang J."/>
            <person name="Song Z."/>
            <person name="Hao X."/>
            <person name="Chen Q."/>
        </authorList>
    </citation>
    <scope>UBIQUITINATION</scope>
    <scope>DEUBIQUITINATION</scope>
</reference>
<accession>Q80U63</accession>
<accession>A2A7Y7</accession>
<accession>A8Y5E4</accession>
<accession>Q3V3B8</accession>
<accession>Q80WP4</accession>
<accession>Q80XK3</accession>
<accession>Q8BHF0</accession>
<accession>Q8BKV5</accession>
<accession>Q8R535</accession>
<accession>Q923X2</accession>
<proteinExistence type="evidence at protein level"/>
<evidence type="ECO:0000250" key="1">
    <source>
        <dbReference type="UniProtKB" id="O95140"/>
    </source>
</evidence>
<evidence type="ECO:0000250" key="2">
    <source>
        <dbReference type="UniProtKB" id="Q8IWA4"/>
    </source>
</evidence>
<evidence type="ECO:0000250" key="3">
    <source>
        <dbReference type="UniProtKB" id="Q8R500"/>
    </source>
</evidence>
<evidence type="ECO:0000255" key="4"/>
<evidence type="ECO:0000255" key="5">
    <source>
        <dbReference type="PROSITE-ProRule" id="PRU01055"/>
    </source>
</evidence>
<evidence type="ECO:0000269" key="6">
    <source>
    </source>
</evidence>
<evidence type="ECO:0000269" key="7">
    <source>
    </source>
</evidence>
<evidence type="ECO:0000269" key="8">
    <source>
    </source>
</evidence>
<evidence type="ECO:0000269" key="9">
    <source>
    </source>
</evidence>
<evidence type="ECO:0000269" key="10">
    <source>
    </source>
</evidence>
<evidence type="ECO:0000269" key="11">
    <source>
    </source>
</evidence>
<evidence type="ECO:0000269" key="12">
    <source>
    </source>
</evidence>
<evidence type="ECO:0000303" key="13">
    <source>
    </source>
</evidence>
<evidence type="ECO:0000305" key="14"/>
<evidence type="ECO:0007744" key="15">
    <source>
    </source>
</evidence>
<feature type="chain" id="PRO_0000127676" description="Mitofusin-2">
    <location>
        <begin position="1"/>
        <end position="757"/>
    </location>
</feature>
<feature type="topological domain" description="Cytoplasmic" evidence="4">
    <location>
        <begin position="1"/>
        <end position="604"/>
    </location>
</feature>
<feature type="transmembrane region" description="Helical; Name=1" evidence="4">
    <location>
        <begin position="605"/>
        <end position="625"/>
    </location>
</feature>
<feature type="topological domain" description="Mitochondrial intermembrane" evidence="4">
    <location>
        <position position="626"/>
    </location>
</feature>
<feature type="transmembrane region" description="Helical; Name=2" evidence="4">
    <location>
        <begin position="627"/>
        <end position="647"/>
    </location>
</feature>
<feature type="topological domain" description="Cytoplasmic" evidence="4">
    <location>
        <begin position="648"/>
        <end position="757"/>
    </location>
</feature>
<feature type="domain" description="Dynamin-type G" evidence="5">
    <location>
        <begin position="93"/>
        <end position="342"/>
    </location>
</feature>
<feature type="region of interest" description="Part of a helix bundle domain, formed by helices from N-terminal and C-terminal regions" evidence="2">
    <location>
        <begin position="30"/>
        <end position="94"/>
    </location>
</feature>
<feature type="region of interest" description="G1 motif" evidence="5">
    <location>
        <begin position="103"/>
        <end position="110"/>
    </location>
</feature>
<feature type="region of interest" description="G2 motif" evidence="5">
    <location>
        <begin position="129"/>
        <end position="130"/>
    </location>
</feature>
<feature type="region of interest" description="G3 motif" evidence="5">
    <location>
        <begin position="199"/>
        <end position="202"/>
    </location>
</feature>
<feature type="region of interest" description="G4 motif" evidence="5">
    <location>
        <begin position="258"/>
        <end position="261"/>
    </location>
</feature>
<feature type="region of interest" description="G5 motif" evidence="5">
    <location>
        <position position="288"/>
    </location>
</feature>
<feature type="region of interest" description="Part of a helix bundle domain, formed by helices from N-terminal and C-terminal regions" evidence="2">
    <location>
        <begin position="359"/>
        <end position="385"/>
    </location>
</feature>
<feature type="region of interest" description="Part of a helix bundle domain, formed by helices from N-terminal and C-terminal regions" evidence="2">
    <location>
        <begin position="722"/>
        <end position="753"/>
    </location>
</feature>
<feature type="coiled-coil region" evidence="4">
    <location>
        <begin position="406"/>
        <end position="434"/>
    </location>
</feature>
<feature type="coiled-coil region" evidence="4">
    <location>
        <begin position="696"/>
        <end position="738"/>
    </location>
</feature>
<feature type="binding site" evidence="2">
    <location>
        <begin position="106"/>
        <end position="111"/>
    </location>
    <ligand>
        <name>GTP</name>
        <dbReference type="ChEBI" id="CHEBI:37565"/>
    </ligand>
</feature>
<feature type="binding site" evidence="2">
    <location>
        <begin position="258"/>
        <end position="261"/>
    </location>
    <ligand>
        <name>GTP</name>
        <dbReference type="ChEBI" id="CHEBI:37565"/>
    </ligand>
</feature>
<feature type="binding site" evidence="2">
    <location>
        <position position="305"/>
    </location>
    <ligand>
        <name>GTP</name>
        <dbReference type="ChEBI" id="CHEBI:37565"/>
    </ligand>
</feature>
<feature type="binding site" evidence="2">
    <location>
        <position position="307"/>
    </location>
    <ligand>
        <name>GTP</name>
        <dbReference type="ChEBI" id="CHEBI:37565"/>
    </ligand>
</feature>
<feature type="modified residue" description="Phosphothreonine; by PINK1" evidence="1">
    <location>
        <position position="111"/>
    </location>
</feature>
<feature type="modified residue" description="Phosphoserine" evidence="15">
    <location>
        <position position="442"/>
    </location>
</feature>
<feature type="splice variant" id="VSP_010365" description="In isoform 2." evidence="13">
    <original>VQRPLPLTPANPSMPPLPQSSLTQEELMVSMVT</original>
    <variation>ARSSFPWCIMGDHPDTRYGSQSTTAGVLRAEAI</variation>
    <location>
        <begin position="573"/>
        <end position="605"/>
    </location>
</feature>
<feature type="splice variant" id="VSP_010366" description="In isoform 2." evidence="13">
    <location>
        <begin position="606"/>
        <end position="757"/>
    </location>
</feature>
<feature type="sequence conflict" description="In Ref. 9; AAH46503." evidence="14" ref="9">
    <original>P</original>
    <variation>L</variation>
    <location>
        <position position="123"/>
    </location>
</feature>
<feature type="sequence conflict" description="In Ref. 7; BAC33826." evidence="14" ref="7">
    <original>L</original>
    <variation>I</variation>
    <location>
        <position position="167"/>
    </location>
</feature>
<feature type="sequence conflict" description="In Ref. 2; AAK27416." evidence="14" ref="2">
    <original>Q</original>
    <variation>K</variation>
    <location>
        <position position="332"/>
    </location>
</feature>
<feature type="sequence conflict" description="In Ref. 3; BAB39351 and 4; AAK66559." evidence="14" ref="3 4">
    <original>Q</original>
    <variation>R</variation>
    <location>
        <position position="344"/>
    </location>
</feature>
<feature type="sequence conflict" description="In Ref. 3; BAB39351." evidence="14" ref="3">
    <original>E</original>
    <variation>G</variation>
    <location>
        <position position="437"/>
    </location>
</feature>
<feature type="sequence conflict" description="In Ref. 2; AAK27416." evidence="14" ref="2">
    <original>S</original>
    <variation>N</variation>
    <location>
        <position position="570"/>
    </location>
</feature>
<feature type="sequence conflict" description="In Ref. 2; AAK27416." evidence="14" ref="2">
    <original>S</original>
    <variation>G</variation>
    <location>
        <position position="592"/>
    </location>
</feature>
<feature type="sequence conflict" description="In Ref. 2; AAK27416." evidence="14" ref="2">
    <original>V</original>
    <variation>G</variation>
    <location>
        <position position="601"/>
    </location>
</feature>
<feature type="sequence conflict" description="In Ref. 2; AAK27416." evidence="14" ref="2">
    <original>LIA</original>
    <variation>IIP</variation>
    <location>
        <begin position="633"/>
        <end position="635"/>
    </location>
</feature>
<feature type="sequence conflict" description="In Ref. 2; AAK27416." evidence="14" ref="2">
    <original>A</original>
    <variation>T</variation>
    <location>
        <position position="656"/>
    </location>
</feature>
<feature type="sequence conflict" description="In Ref. 2; AAK27416." evidence="14" ref="2">
    <original>R</original>
    <variation>K</variation>
    <location>
        <position position="659"/>
    </location>
</feature>
<feature type="sequence conflict" description="In Ref. 4; AAK66559." evidence="14" ref="4">
    <original>V</original>
    <variation>A</variation>
    <location>
        <position position="666"/>
    </location>
</feature>
<feature type="sequence conflict" description="In Ref. 3; BAB39351." evidence="14" ref="3">
    <original>E</original>
    <variation>D</variation>
    <location>
        <position position="667"/>
    </location>
</feature>
<feature type="sequence conflict" description="In Ref. 3; BAB39351." evidence="14" ref="3">
    <original>I</original>
    <variation>T</variation>
    <location>
        <position position="676"/>
    </location>
</feature>
<feature type="sequence conflict" description="In Ref. 2; AAK27416." evidence="14" ref="2">
    <original>A</original>
    <variation>G</variation>
    <location>
        <position position="697"/>
    </location>
</feature>
<feature type="sequence conflict" description="In Ref. 2; AAK27416." evidence="14" ref="2">
    <original>R</original>
    <variation>K</variation>
    <location>
        <position position="730"/>
    </location>
</feature>
<organism>
    <name type="scientific">Mus musculus</name>
    <name type="common">Mouse</name>
    <dbReference type="NCBI Taxonomy" id="10090"/>
    <lineage>
        <taxon>Eukaryota</taxon>
        <taxon>Metazoa</taxon>
        <taxon>Chordata</taxon>
        <taxon>Craniata</taxon>
        <taxon>Vertebrata</taxon>
        <taxon>Euteleostomi</taxon>
        <taxon>Mammalia</taxon>
        <taxon>Eutheria</taxon>
        <taxon>Euarchontoglires</taxon>
        <taxon>Glires</taxon>
        <taxon>Rodentia</taxon>
        <taxon>Myomorpha</taxon>
        <taxon>Muroidea</taxon>
        <taxon>Muridae</taxon>
        <taxon>Murinae</taxon>
        <taxon>Mus</taxon>
        <taxon>Mus</taxon>
    </lineage>
</organism>
<name>MFN2_MOUSE</name>
<comment type="function">
    <text evidence="1 3 7 9 10 11">Mitochondrial outer membrane GTPase that mediates mitochondrial clustering and fusion (PubMed:12527753, PubMed:23620051, PubMed:23921378). Mitochondria are highly dynamic organelles, and their morphology is determined by the equilibrium between mitochondrial fusion and fission events. Overexpression induces the formation of mitochondrial networks. Membrane clustering requires GTPase activity and may involve a major rearrangement of the coiled coil domains (By similarity). Plays a central role in mitochondrial metabolism and may be associated with obesity and/or apoptosis processes. Plays an important role in the regulation of vascular smooth muscle cell proliferation (By similarity). Involved in the clearance of damaged mitochondria via selective autophagy (mitophagy). Is required for PRKN recruitment to dysfunctional mitochondria (PubMed:23620051). Involved in the control of unfolded protein response (UPR) upon ER stress including activation of apoptosis and autophagy during ER stress (PubMed:23921556). Acts as an upstream regulator of EIF2AK3 and suppresses EIF2AK3 activation under basal conditions (PubMed:23921556).</text>
</comment>
<comment type="catalytic activity">
    <reaction evidence="1">
        <text>GTP + H2O = GDP + phosphate + H(+)</text>
        <dbReference type="Rhea" id="RHEA:19669"/>
        <dbReference type="ChEBI" id="CHEBI:15377"/>
        <dbReference type="ChEBI" id="CHEBI:15378"/>
        <dbReference type="ChEBI" id="CHEBI:37565"/>
        <dbReference type="ChEBI" id="CHEBI:43474"/>
        <dbReference type="ChEBI" id="CHEBI:58189"/>
    </reaction>
    <physiologicalReaction direction="left-to-right" evidence="1">
        <dbReference type="Rhea" id="RHEA:19670"/>
    </physiologicalReaction>
</comment>
<comment type="subunit">
    <text evidence="1 3 9 11 14">Forms homomultimers and heteromultimers with MFN1 (PubMed:12527753). Oligomerization is essential for mitochondrion fusion (Probable). Interacts with VAT1 (By similarity). Interacts with STOML2; may form heterooligomers (By similarity). Interacts (phosphorylated) with PRKN (PubMed:23620051). Interacts with EIF2AK3 (By similarity). Interacts with THG1L; THG1L probably functions as a guanyl-nucleotide exchange factor/GEF, activating MFN2.</text>
</comment>
<comment type="interaction">
    <interactant intactId="EBI-8437663">
        <id>Q80U63</id>
    </interactant>
    <interactant intactId="EBI-822441">
        <id>O08734</id>
        <label>Bak1</label>
    </interactant>
    <organismsDiffer>false</organismsDiffer>
    <experiments>2</experiments>
</comment>
<comment type="interaction">
    <interactant intactId="EBI-8437663">
        <id>Q80U63</id>
    </interactant>
    <interactant intactId="EBI-1226344">
        <id>Q9Z2B5</id>
        <label>Eif2ak3</label>
    </interactant>
    <organismsDiffer>false</organismsDiffer>
    <experiments>2</experiments>
</comment>
<comment type="interaction">
    <interactant intactId="EBI-8437663">
        <id>Q80U63</id>
    </interactant>
    <interactant intactId="EBI-519866">
        <id>Q16611</id>
        <label>BAK1</label>
    </interactant>
    <organismsDiffer>true</organismsDiffer>
    <experiments>3</experiments>
</comment>
<comment type="subcellular location">
    <subcellularLocation>
        <location evidence="1">Mitochondrion outer membrane</location>
        <topology evidence="1">Multi-pass membrane protein</topology>
    </subcellularLocation>
    <text evidence="1">Colocalizes with BAX during apoptosis.</text>
</comment>
<comment type="alternative products">
    <event type="alternative splicing"/>
    <isoform>
        <id>Q80U63-1</id>
        <name>1</name>
        <sequence type="displayed"/>
    </isoform>
    <isoform>
        <id>Q80U63-2</id>
        <name>2</name>
        <sequence type="described" ref="VSP_010365 VSP_010366"/>
    </isoform>
</comment>
<comment type="tissue specificity">
    <text evidence="6 8">Ubiquitous. Expression is markedly reduced in ApoE-knockout mouse atherosclerotic arteries.</text>
</comment>
<comment type="domain">
    <text evidence="2">A helix bundle is formed by helices from the N-terminal and the C-terminal part of the protein. The GTPase domain cannot be expressed by itself, without the helix bundle. Rearrangement of the helix bundle and/or of the coiled coil domains may bring membranes from adjacent mitochondria into close contact, and thereby play a role in mitochondrial fusion.</text>
</comment>
<comment type="PTM">
    <text evidence="9">Phosphorylated by PINK1.</text>
</comment>
<comment type="PTM">
    <text evidence="1 9 12">Ubiquitinated by non-degradative ubiquitin by PRKN, promoting mitochondrial fusion; deubiquitination by USP30 inhibits mitochondrial fusion (PubMed:23620051, PubMed:24513856). Ubiquitinated by HUWE1 when dietary stearate (C18:0) levels are low; ubiquitination inhibits mitochondrial fusion (By similarity).</text>
</comment>
<comment type="disruption phenotype">
    <text evidence="9">Mutant mice die early during embryonic development (PubMed:12527753). Heart-specific disruption causes cardiomyopathy in aging mice, characterized by dilated hearts that are insensitive to beta-adrenergic stimulation and impaired contractile performance (PubMed:23620051). Mutant cardiomyocytes display mitochondrial enlargement with respiratory impairment (PubMed:23620051).</text>
</comment>
<comment type="similarity">
    <text evidence="5">Belongs to the TRAFAC class dynamin-like GTPase superfamily. Dynamin/Fzo/YdjA family. Mitofusin subfamily.</text>
</comment>
<comment type="sequence caution" evidence="14">
    <conflict type="erroneous initiation">
        <sequence resource="EMBL-CDS" id="BAC65502"/>
    </conflict>
    <text>Extended N-terminus.</text>
</comment>
<protein>
    <recommendedName>
        <fullName>Mitofusin-2</fullName>
        <ecNumber evidence="1">3.6.5.-</ecNumber>
    </recommendedName>
    <alternativeName>
        <fullName>Hypertension-related protein 1</fullName>
    </alternativeName>
    <alternativeName>
        <fullName>Mitochondrial assembly regulatory factor</fullName>
        <shortName>HSG protein</shortName>
    </alternativeName>
    <alternativeName>
        <fullName>Transmembrane GTPase MFN2</fullName>
    </alternativeName>
</protein>
<gene>
    <name type="primary">Mfn2</name>
    <name type="synonym">Kiaa0214</name>
    <name type="synonym">Marf</name>
</gene>